<evidence type="ECO:0000255" key="1">
    <source>
        <dbReference type="HAMAP-Rule" id="MF_00472"/>
    </source>
</evidence>
<comment type="function">
    <text evidence="1">O-methyltransferase that catalyzes the 2 O-methylation steps in the ubiquinone biosynthetic pathway.</text>
</comment>
<comment type="catalytic activity">
    <reaction evidence="1">
        <text>a 3-demethylubiquinol + S-adenosyl-L-methionine = a ubiquinol + S-adenosyl-L-homocysteine + H(+)</text>
        <dbReference type="Rhea" id="RHEA:44380"/>
        <dbReference type="Rhea" id="RHEA-COMP:9566"/>
        <dbReference type="Rhea" id="RHEA-COMP:10914"/>
        <dbReference type="ChEBI" id="CHEBI:15378"/>
        <dbReference type="ChEBI" id="CHEBI:17976"/>
        <dbReference type="ChEBI" id="CHEBI:57856"/>
        <dbReference type="ChEBI" id="CHEBI:59789"/>
        <dbReference type="ChEBI" id="CHEBI:84422"/>
        <dbReference type="EC" id="2.1.1.64"/>
    </reaction>
</comment>
<comment type="catalytic activity">
    <reaction evidence="1">
        <text>a 3-(all-trans-polyprenyl)benzene-1,2-diol + S-adenosyl-L-methionine = a 2-methoxy-6-(all-trans-polyprenyl)phenol + S-adenosyl-L-homocysteine + H(+)</text>
        <dbReference type="Rhea" id="RHEA:31411"/>
        <dbReference type="Rhea" id="RHEA-COMP:9550"/>
        <dbReference type="Rhea" id="RHEA-COMP:9551"/>
        <dbReference type="ChEBI" id="CHEBI:15378"/>
        <dbReference type="ChEBI" id="CHEBI:57856"/>
        <dbReference type="ChEBI" id="CHEBI:59789"/>
        <dbReference type="ChEBI" id="CHEBI:62729"/>
        <dbReference type="ChEBI" id="CHEBI:62731"/>
        <dbReference type="EC" id="2.1.1.222"/>
    </reaction>
</comment>
<comment type="pathway">
    <text evidence="1">Cofactor biosynthesis; ubiquinone biosynthesis.</text>
</comment>
<comment type="similarity">
    <text evidence="1">Belongs to the methyltransferase superfamily. UbiG/COQ3 family.</text>
</comment>
<name>UBIG_PASMU</name>
<sequence length="242" mass="27284">MQNIDQQELDKFEKMAKSWWDPQGDFKPIHQLNPLRLSYIAQQANGLTGKKVLDVGCGGGILSESMAKQGAIVTGIDMSSAPLQVARKHALESGLHIDYQQITIEEFLQNQTALFAERGEDEKFDVITCMEMLEHVPDPSSIIACCKQLLKPNGVIFFSTINRTLKAWALVIIGAEYVLKMLPKGTHDYDKFIKPAELLHWCDEAQLTCLDMVGYHYNPLTGKFWLNKDVSANYMASFRIQS</sequence>
<dbReference type="EC" id="2.1.1.222" evidence="1"/>
<dbReference type="EC" id="2.1.1.64" evidence="1"/>
<dbReference type="EMBL" id="AE004439">
    <property type="protein sequence ID" value="AAK02924.1"/>
    <property type="molecule type" value="Genomic_DNA"/>
</dbReference>
<dbReference type="RefSeq" id="WP_005754279.1">
    <property type="nucleotide sequence ID" value="NC_002663.1"/>
</dbReference>
<dbReference type="SMR" id="Q9CMI6"/>
<dbReference type="STRING" id="272843.PM0840"/>
<dbReference type="EnsemblBacteria" id="AAK02924">
    <property type="protein sequence ID" value="AAK02924"/>
    <property type="gene ID" value="PM0840"/>
</dbReference>
<dbReference type="KEGG" id="pmu:PM0840"/>
<dbReference type="PATRIC" id="fig|272843.6.peg.851"/>
<dbReference type="HOGENOM" id="CLU_042432_5_0_6"/>
<dbReference type="OrthoDB" id="9801538at2"/>
<dbReference type="UniPathway" id="UPA00232"/>
<dbReference type="Proteomes" id="UP000000809">
    <property type="component" value="Chromosome"/>
</dbReference>
<dbReference type="GO" id="GO:0102208">
    <property type="term" value="F:2-polyprenyl-6-hydroxyphenol methylase activity"/>
    <property type="evidence" value="ECO:0007669"/>
    <property type="project" value="UniProtKB-EC"/>
</dbReference>
<dbReference type="GO" id="GO:0061542">
    <property type="term" value="F:3-demethylubiquinol 3-O-methyltransferase activity"/>
    <property type="evidence" value="ECO:0007669"/>
    <property type="project" value="UniProtKB-UniRule"/>
</dbReference>
<dbReference type="GO" id="GO:0010420">
    <property type="term" value="F:polyprenyldihydroxybenzoate methyltransferase activity"/>
    <property type="evidence" value="ECO:0007669"/>
    <property type="project" value="InterPro"/>
</dbReference>
<dbReference type="GO" id="GO:0032259">
    <property type="term" value="P:methylation"/>
    <property type="evidence" value="ECO:0007669"/>
    <property type="project" value="UniProtKB-KW"/>
</dbReference>
<dbReference type="CDD" id="cd02440">
    <property type="entry name" value="AdoMet_MTases"/>
    <property type="match status" value="1"/>
</dbReference>
<dbReference type="FunFam" id="3.40.50.150:FF:000028">
    <property type="entry name" value="Ubiquinone biosynthesis O-methyltransferase"/>
    <property type="match status" value="1"/>
</dbReference>
<dbReference type="Gene3D" id="3.40.50.150">
    <property type="entry name" value="Vaccinia Virus protein VP39"/>
    <property type="match status" value="1"/>
</dbReference>
<dbReference type="HAMAP" id="MF_00472">
    <property type="entry name" value="UbiG"/>
    <property type="match status" value="1"/>
</dbReference>
<dbReference type="InterPro" id="IPR029063">
    <property type="entry name" value="SAM-dependent_MTases_sf"/>
</dbReference>
<dbReference type="InterPro" id="IPR010233">
    <property type="entry name" value="UbiG_MeTrfase"/>
</dbReference>
<dbReference type="NCBIfam" id="TIGR01983">
    <property type="entry name" value="UbiG"/>
    <property type="match status" value="1"/>
</dbReference>
<dbReference type="PANTHER" id="PTHR43464">
    <property type="entry name" value="METHYLTRANSFERASE"/>
    <property type="match status" value="1"/>
</dbReference>
<dbReference type="PANTHER" id="PTHR43464:SF19">
    <property type="entry name" value="UBIQUINONE BIOSYNTHESIS O-METHYLTRANSFERASE, MITOCHONDRIAL"/>
    <property type="match status" value="1"/>
</dbReference>
<dbReference type="Pfam" id="PF13489">
    <property type="entry name" value="Methyltransf_23"/>
    <property type="match status" value="1"/>
</dbReference>
<dbReference type="SUPFAM" id="SSF53335">
    <property type="entry name" value="S-adenosyl-L-methionine-dependent methyltransferases"/>
    <property type="match status" value="1"/>
</dbReference>
<reference key="1">
    <citation type="journal article" date="2001" name="Proc. Natl. Acad. Sci. U.S.A.">
        <title>Complete genomic sequence of Pasteurella multocida Pm70.</title>
        <authorList>
            <person name="May B.J."/>
            <person name="Zhang Q."/>
            <person name="Li L.L."/>
            <person name="Paustian M.L."/>
            <person name="Whittam T.S."/>
            <person name="Kapur V."/>
        </authorList>
    </citation>
    <scope>NUCLEOTIDE SEQUENCE [LARGE SCALE GENOMIC DNA]</scope>
    <source>
        <strain>Pm70</strain>
    </source>
</reference>
<feature type="chain" id="PRO_0000193388" description="Ubiquinone biosynthesis O-methyltransferase">
    <location>
        <begin position="1"/>
        <end position="242"/>
    </location>
</feature>
<feature type="binding site" evidence="1">
    <location>
        <position position="36"/>
    </location>
    <ligand>
        <name>S-adenosyl-L-methionine</name>
        <dbReference type="ChEBI" id="CHEBI:59789"/>
    </ligand>
</feature>
<feature type="binding site" evidence="1">
    <location>
        <position position="56"/>
    </location>
    <ligand>
        <name>S-adenosyl-L-methionine</name>
        <dbReference type="ChEBI" id="CHEBI:59789"/>
    </ligand>
</feature>
<feature type="binding site" evidence="1">
    <location>
        <position position="77"/>
    </location>
    <ligand>
        <name>S-adenosyl-L-methionine</name>
        <dbReference type="ChEBI" id="CHEBI:59789"/>
    </ligand>
</feature>
<feature type="binding site" evidence="1">
    <location>
        <position position="130"/>
    </location>
    <ligand>
        <name>S-adenosyl-L-methionine</name>
        <dbReference type="ChEBI" id="CHEBI:59789"/>
    </ligand>
</feature>
<proteinExistence type="inferred from homology"/>
<protein>
    <recommendedName>
        <fullName evidence="1">Ubiquinone biosynthesis O-methyltransferase</fullName>
    </recommendedName>
    <alternativeName>
        <fullName evidence="1">2-polyprenyl-6-hydroxyphenol methylase</fullName>
        <ecNumber evidence="1">2.1.1.222</ecNumber>
    </alternativeName>
    <alternativeName>
        <fullName evidence="1">3-demethylubiquinone 3-O-methyltransferase</fullName>
        <ecNumber evidence="1">2.1.1.64</ecNumber>
    </alternativeName>
</protein>
<accession>Q9CMI6</accession>
<keyword id="KW-0489">Methyltransferase</keyword>
<keyword id="KW-1185">Reference proteome</keyword>
<keyword id="KW-0949">S-adenosyl-L-methionine</keyword>
<keyword id="KW-0808">Transferase</keyword>
<keyword id="KW-0831">Ubiquinone biosynthesis</keyword>
<organism>
    <name type="scientific">Pasteurella multocida (strain Pm70)</name>
    <dbReference type="NCBI Taxonomy" id="272843"/>
    <lineage>
        <taxon>Bacteria</taxon>
        <taxon>Pseudomonadati</taxon>
        <taxon>Pseudomonadota</taxon>
        <taxon>Gammaproteobacteria</taxon>
        <taxon>Pasteurellales</taxon>
        <taxon>Pasteurellaceae</taxon>
        <taxon>Pasteurella</taxon>
    </lineage>
</organism>
<gene>
    <name evidence="1" type="primary">ubiG</name>
    <name type="ordered locus">PM0840</name>
</gene>